<comment type="function">
    <text evidence="1 7">Transcriptional activator that regulates the tissue specific expression of multiple genes, especially in pancreas and liver (By similarity). Binds to the hepatocyte specific promoter element HP1. Binds to the inverted palindrome 5'-GTTAATNATTAAC-3'.</text>
</comment>
<comment type="subunit">
    <text>Binds DNA as dimer. Forms a homodimer or heterodimer with HNF1-alpha-B. Potentially also form a heterodimer with HNF1-beta.</text>
</comment>
<comment type="subcellular location">
    <subcellularLocation>
        <location>Nucleus</location>
    </subcellularLocation>
</comment>
<comment type="tissue specificity">
    <text>Protein expressed in liver, stomach, small intestine, colon and kidney. Not expressed in spleen, lung, blood, heart muscle, skeletal muscle, testis and brain.</text>
</comment>
<comment type="developmental stage">
    <text>Protein found in 2-day-old hatched larvae (stage 35).</text>
</comment>
<comment type="similarity">
    <text evidence="8">Belongs to the HNF1 homeobox family.</text>
</comment>
<proteinExistence type="evidence at transcript level"/>
<accession>Q05041</accession>
<sequence length="605" mass="66577">MASQLSYLQRELLQALLESGVTKEALKKALADGDDYTYPNVPLDDIRNLDEGENCVQLPNGLGESHISEDESSDDGEDFTPPIMKELERLSPEEAAHQKAVVERLLQEDSWHVAKLVKSYLQQHNIPQREVVETTGLNQSHLSQHLNKGTPMKTQKRAALYTWYVGKQREIARLFTFTEFTHAGQGLITDDMSCDEVPTKKMRRNRFKWGPASQQILFQAYERQKNPSKEEREALVEECNRAECLQRGVSPSQAQGLGSNLVTEVRVYNWFANRRKEEAFRHKLAMDTYNGQQNSAPTLSAHDLPHGKTYGFRYIQDSSTDRSAVMANSQSTPSPSALEPSHSLMNSDSKMIPVSGGSLPPVSTLTALHNVDHSQHTLGQTQNLIMASLPSVMTIGTDTALGPAFSNPGSSTLVIGLASQTQSVPVINSVGSSLTTLQSVQFSQQLHPSHQLHPSHQQPIVQQVQSHMAQNPFMATMAQLQSPHAIYSHKPDVAQYASAGFFPQTMVITDTSNLGTLTSLTPSKQVVPLHTTAHGDAPGSQLQNQDSSILHLPLCHRLSPIPTVSSASLVHYHNSSSPENHSHLLSPSHNTIDSFISTQMASSSQ</sequence>
<organism>
    <name type="scientific">Xenopus laevis</name>
    <name type="common">African clawed frog</name>
    <dbReference type="NCBI Taxonomy" id="8355"/>
    <lineage>
        <taxon>Eukaryota</taxon>
        <taxon>Metazoa</taxon>
        <taxon>Chordata</taxon>
        <taxon>Craniata</taxon>
        <taxon>Vertebrata</taxon>
        <taxon>Euteleostomi</taxon>
        <taxon>Amphibia</taxon>
        <taxon>Batrachia</taxon>
        <taxon>Anura</taxon>
        <taxon>Pipoidea</taxon>
        <taxon>Pipidae</taxon>
        <taxon>Xenopodinae</taxon>
        <taxon>Xenopus</taxon>
        <taxon>Xenopus</taxon>
    </lineage>
</organism>
<evidence type="ECO:0000250" key="1"/>
<evidence type="ECO:0000255" key="2"/>
<evidence type="ECO:0000255" key="3">
    <source>
        <dbReference type="PROSITE-ProRule" id="PRU00108"/>
    </source>
</evidence>
<evidence type="ECO:0000255" key="4">
    <source>
        <dbReference type="PROSITE-ProRule" id="PRU01285"/>
    </source>
</evidence>
<evidence type="ECO:0000255" key="5">
    <source>
        <dbReference type="PROSITE-ProRule" id="PRU01286"/>
    </source>
</evidence>
<evidence type="ECO:0000256" key="6">
    <source>
        <dbReference type="SAM" id="MobiDB-lite"/>
    </source>
</evidence>
<evidence type="ECO:0000269" key="7">
    <source>
    </source>
</evidence>
<evidence type="ECO:0000305" key="8"/>
<protein>
    <recommendedName>
        <fullName>Hepatocyte nuclear factor 1-alpha-A</fullName>
        <shortName>HNF-1-alpha-A</shortName>
        <shortName>HNF-1A-A</shortName>
    </recommendedName>
    <alternativeName>
        <fullName>LFB1</fullName>
    </alternativeName>
    <alternativeName>
        <fullName>Transcription factor 1-A</fullName>
        <shortName>TCF-1-A</shortName>
    </alternativeName>
    <alternativeName>
        <fullName>XLFB1a</fullName>
    </alternativeName>
</protein>
<name>HNFAA_XENLA</name>
<keyword id="KW-0010">Activator</keyword>
<keyword id="KW-0238">DNA-binding</keyword>
<keyword id="KW-0371">Homeobox</keyword>
<keyword id="KW-0539">Nucleus</keyword>
<keyword id="KW-1185">Reference proteome</keyword>
<keyword id="KW-0804">Transcription</keyword>
<keyword id="KW-0805">Transcription regulation</keyword>
<reference key="1">
    <citation type="journal article" date="1993" name="Mol. Cell. Biol.">
        <title>Developmental regulation and tissue distribution of the liver transcription factor LFB1 (HNF1) in Xenopus laevis.</title>
        <authorList>
            <person name="Bartkowski S."/>
            <person name="Zapp D."/>
            <person name="Weber H."/>
            <person name="Eberle G."/>
            <person name="Zoidl C."/>
            <person name="Senkel S."/>
            <person name="Klein-Hitpass L."/>
            <person name="Ryffel G.U."/>
        </authorList>
    </citation>
    <scope>NUCLEOTIDE SEQUENCE [MRNA]</scope>
    <source>
        <tissue>Liver</tissue>
    </source>
</reference>
<reference key="2">
    <citation type="journal article" date="1993" name="Gene">
        <title>Genomic structure of the Xenopus laevis liver transcription factor LFB1.</title>
        <authorList>
            <person name="Zapp D."/>
            <person name="Bartkowski S."/>
            <person name="Zoidl C."/>
            <person name="Klein-Hitpass L."/>
            <person name="Ryffel G.U."/>
        </authorList>
    </citation>
    <scope>NUCLEOTIDE SEQUENCE [MRNA]</scope>
    <source>
        <tissue>Liver</tissue>
    </source>
</reference>
<reference key="3">
    <citation type="journal article" date="1996" name="Int. J. Dev. Biol.">
        <title>Regulation and function of the tissue-specific transcription factor HNF1 alpha (LFB1) during Xenopus development.</title>
        <authorList>
            <person name="Weber H."/>
            <person name="Pogge von Strandmann E."/>
            <person name="Holewa B."/>
            <person name="Bartkowski S."/>
            <person name="Zapp D."/>
            <person name="Zoidl C."/>
            <person name="Ryffel G.U."/>
        </authorList>
    </citation>
    <scope>FUNCTION</scope>
</reference>
<feature type="chain" id="PRO_0000049119" description="Hepatocyte nuclear factor 1-alpha-A">
    <location>
        <begin position="1"/>
        <end position="605"/>
    </location>
</feature>
<feature type="domain" description="HNF-p1" evidence="5">
    <location>
        <begin position="1"/>
        <end position="32"/>
    </location>
</feature>
<feature type="domain" description="POU-specific atypical" evidence="4">
    <location>
        <begin position="85"/>
        <end position="180"/>
    </location>
</feature>
<feature type="DNA-binding region" description="Homeobox; HNF1-type" evidence="3">
    <location>
        <begin position="202"/>
        <end position="282"/>
    </location>
</feature>
<feature type="region of interest" description="Dimerization" evidence="1">
    <location>
        <begin position="1"/>
        <end position="31"/>
    </location>
</feature>
<feature type="region of interest" description="Disordered" evidence="6">
    <location>
        <begin position="57"/>
        <end position="81"/>
    </location>
</feature>
<feature type="region of interest" description="Interaction with DNA" evidence="1">
    <location>
        <begin position="128"/>
        <end position="130"/>
    </location>
</feature>
<feature type="region of interest" description="Interaction with DNA" evidence="1">
    <location>
        <begin position="141"/>
        <end position="147"/>
    </location>
</feature>
<feature type="region of interest" description="Interaction with DNA" evidence="1">
    <location>
        <begin position="153"/>
        <end position="156"/>
    </location>
</feature>
<feature type="region of interest" description="Interaction with DNA" evidence="1">
    <location>
        <begin position="206"/>
        <end position="209"/>
    </location>
</feature>
<feature type="region of interest" description="Interaction with DNA" evidence="1">
    <location>
        <begin position="266"/>
        <end position="268"/>
    </location>
</feature>
<feature type="region of interest" description="Interaction with DNA" evidence="1">
    <location>
        <begin position="273"/>
        <end position="276"/>
    </location>
</feature>
<feature type="region of interest" description="Disordered" evidence="6">
    <location>
        <begin position="321"/>
        <end position="343"/>
    </location>
</feature>
<feature type="region of interest" description="Not present in other members of the HNF1 family">
    <location>
        <begin position="448"/>
        <end position="453"/>
    </location>
</feature>
<feature type="short sequence motif" description="Nuclear localization signal" evidence="2">
    <location>
        <begin position="200"/>
        <end position="208"/>
    </location>
</feature>
<feature type="compositionally biased region" description="Polar residues" evidence="6">
    <location>
        <begin position="321"/>
        <end position="335"/>
    </location>
</feature>
<gene>
    <name type="primary">hnf1a-a</name>
    <name type="synonym">hnf1-a</name>
    <name type="synonym">lfb1a</name>
    <name type="synonym">tcf1-a</name>
</gene>
<dbReference type="EMBL" id="X64759">
    <property type="protein sequence ID" value="CAA46007.1"/>
    <property type="molecule type" value="mRNA"/>
</dbReference>
<dbReference type="PIR" id="A48115">
    <property type="entry name" value="A48115"/>
</dbReference>
<dbReference type="PIR" id="T01067">
    <property type="entry name" value="T01067"/>
</dbReference>
<dbReference type="RefSeq" id="NP_001095214.1">
    <property type="nucleotide sequence ID" value="NM_001101744.1"/>
</dbReference>
<dbReference type="SMR" id="Q05041"/>
<dbReference type="GeneID" id="378589"/>
<dbReference type="KEGG" id="xla:378589"/>
<dbReference type="AGR" id="Xenbase:XB-GENE-865049"/>
<dbReference type="CTD" id="378589"/>
<dbReference type="Xenbase" id="XB-GENE-865049">
    <property type="gene designation" value="hnf1a.S"/>
</dbReference>
<dbReference type="OMA" id="FAEYSNA"/>
<dbReference type="OrthoDB" id="10069265at2759"/>
<dbReference type="Proteomes" id="UP000186698">
    <property type="component" value="Chromosome 1S"/>
</dbReference>
<dbReference type="Bgee" id="378589">
    <property type="expression patterns" value="Expressed in pancreas and 4 other cell types or tissues"/>
</dbReference>
<dbReference type="GO" id="GO:0005634">
    <property type="term" value="C:nucleus"/>
    <property type="evidence" value="ECO:0000318"/>
    <property type="project" value="GO_Central"/>
</dbReference>
<dbReference type="GO" id="GO:0000981">
    <property type="term" value="F:DNA-binding transcription factor activity, RNA polymerase II-specific"/>
    <property type="evidence" value="ECO:0000318"/>
    <property type="project" value="GO_Central"/>
</dbReference>
<dbReference type="GO" id="GO:0000978">
    <property type="term" value="F:RNA polymerase II cis-regulatory region sequence-specific DNA binding"/>
    <property type="evidence" value="ECO:0000318"/>
    <property type="project" value="GO_Central"/>
</dbReference>
<dbReference type="GO" id="GO:0030073">
    <property type="term" value="P:insulin secretion"/>
    <property type="evidence" value="ECO:0007669"/>
    <property type="project" value="InterPro"/>
</dbReference>
<dbReference type="GO" id="GO:0001889">
    <property type="term" value="P:liver development"/>
    <property type="evidence" value="ECO:0007669"/>
    <property type="project" value="InterPro"/>
</dbReference>
<dbReference type="GO" id="GO:0031016">
    <property type="term" value="P:pancreas development"/>
    <property type="evidence" value="ECO:0007669"/>
    <property type="project" value="InterPro"/>
</dbReference>
<dbReference type="GO" id="GO:0045893">
    <property type="term" value="P:positive regulation of DNA-templated transcription"/>
    <property type="evidence" value="ECO:0007669"/>
    <property type="project" value="InterPro"/>
</dbReference>
<dbReference type="GO" id="GO:0006357">
    <property type="term" value="P:regulation of transcription by RNA polymerase II"/>
    <property type="evidence" value="ECO:0000318"/>
    <property type="project" value="GO_Central"/>
</dbReference>
<dbReference type="CDD" id="cd00086">
    <property type="entry name" value="homeodomain"/>
    <property type="match status" value="1"/>
</dbReference>
<dbReference type="FunFam" id="1.10.10.60:FF:000043">
    <property type="entry name" value="Hepatocyte nuclear factor 1-beta"/>
    <property type="match status" value="1"/>
</dbReference>
<dbReference type="FunFam" id="1.10.260.40:FF:000009">
    <property type="entry name" value="Hepatocyte nuclear factor 1-beta"/>
    <property type="match status" value="1"/>
</dbReference>
<dbReference type="Gene3D" id="1.10.10.60">
    <property type="entry name" value="Homeodomain-like"/>
    <property type="match status" value="1"/>
</dbReference>
<dbReference type="Gene3D" id="1.10.260.40">
    <property type="entry name" value="lambda repressor-like DNA-binding domains"/>
    <property type="match status" value="1"/>
</dbReference>
<dbReference type="InterPro" id="IPR001356">
    <property type="entry name" value="HD"/>
</dbReference>
<dbReference type="InterPro" id="IPR039066">
    <property type="entry name" value="HNF-1"/>
</dbReference>
<dbReference type="InterPro" id="IPR006899">
    <property type="entry name" value="HNF-1_N"/>
</dbReference>
<dbReference type="InterPro" id="IPR044869">
    <property type="entry name" value="HNF-1_POU"/>
</dbReference>
<dbReference type="InterPro" id="IPR023219">
    <property type="entry name" value="HNF1_dimer_N_dom_sf"/>
</dbReference>
<dbReference type="InterPro" id="IPR006898">
    <property type="entry name" value="HNF1a_C"/>
</dbReference>
<dbReference type="InterPro" id="IPR006897">
    <property type="entry name" value="HNF1b_C"/>
</dbReference>
<dbReference type="InterPro" id="IPR044866">
    <property type="entry name" value="HNF_P1"/>
</dbReference>
<dbReference type="InterPro" id="IPR009057">
    <property type="entry name" value="Homeodomain-like_sf"/>
</dbReference>
<dbReference type="InterPro" id="IPR010982">
    <property type="entry name" value="Lambda_DNA-bd_dom_sf"/>
</dbReference>
<dbReference type="PANTHER" id="PTHR11568">
    <property type="entry name" value="HEPATOCYTE NUCLEAR FACTOR 1"/>
    <property type="match status" value="1"/>
</dbReference>
<dbReference type="PANTHER" id="PTHR11568:SF4">
    <property type="entry name" value="HEPATOCYTE NUCLEAR FACTOR 1-ALPHA"/>
    <property type="match status" value="1"/>
</dbReference>
<dbReference type="Pfam" id="PF04814">
    <property type="entry name" value="HNF-1_N"/>
    <property type="match status" value="1"/>
</dbReference>
<dbReference type="Pfam" id="PF04813">
    <property type="entry name" value="HNF-1A_C"/>
    <property type="match status" value="1"/>
</dbReference>
<dbReference type="Pfam" id="PF04812">
    <property type="entry name" value="HNF-1B_C"/>
    <property type="match status" value="1"/>
</dbReference>
<dbReference type="SMART" id="SM00389">
    <property type="entry name" value="HOX"/>
    <property type="match status" value="1"/>
</dbReference>
<dbReference type="SUPFAM" id="SSF100957">
    <property type="entry name" value="Dimerization cofactor of HNF-1 alpha"/>
    <property type="match status" value="1"/>
</dbReference>
<dbReference type="SUPFAM" id="SSF46689">
    <property type="entry name" value="Homeodomain-like"/>
    <property type="match status" value="1"/>
</dbReference>
<dbReference type="SUPFAM" id="SSF47413">
    <property type="entry name" value="lambda repressor-like DNA-binding domains"/>
    <property type="match status" value="1"/>
</dbReference>
<dbReference type="PROSITE" id="PS51937">
    <property type="entry name" value="HNF_P1"/>
    <property type="match status" value="1"/>
</dbReference>
<dbReference type="PROSITE" id="PS00027">
    <property type="entry name" value="HOMEOBOX_1"/>
    <property type="match status" value="1"/>
</dbReference>
<dbReference type="PROSITE" id="PS50071">
    <property type="entry name" value="HOMEOBOX_2"/>
    <property type="match status" value="1"/>
</dbReference>
<dbReference type="PROSITE" id="PS51936">
    <property type="entry name" value="POU_4"/>
    <property type="match status" value="1"/>
</dbReference>